<keyword id="KW-0067">ATP-binding</keyword>
<keyword id="KW-0963">Cytoplasm</keyword>
<keyword id="KW-0418">Kinase</keyword>
<keyword id="KW-0520">NAD</keyword>
<keyword id="KW-0521">NADP</keyword>
<keyword id="KW-0547">Nucleotide-binding</keyword>
<keyword id="KW-1185">Reference proteome</keyword>
<keyword id="KW-0808">Transferase</keyword>
<organism>
    <name type="scientific">Thermococcus sibiricus (strain DSM 12597 / MM 739)</name>
    <dbReference type="NCBI Taxonomy" id="604354"/>
    <lineage>
        <taxon>Archaea</taxon>
        <taxon>Methanobacteriati</taxon>
        <taxon>Methanobacteriota</taxon>
        <taxon>Thermococci</taxon>
        <taxon>Thermococcales</taxon>
        <taxon>Thermococcaceae</taxon>
        <taxon>Thermococcus</taxon>
    </lineage>
</organism>
<accession>C6A5J6</accession>
<gene>
    <name evidence="1" type="primary">nadK</name>
    <name type="ordered locus">TSIB_1840</name>
</gene>
<sequence>MKFGIVARRDREEALKLAYRVYDFLKVNNYEVYVDEEAYIHFPHFSSEDVLSLKKMDVDMIIAIGGDGTVLRVEHNTSKDIPILAVNMGTLGFLAEIEPAETFFAISRILEGDYFIDERMKIRVFVEDVSIPDALNDVVILTSIPGKVTHLKYYVDGELAEDIRADGLIISTPTGSTAYALSAGGPLVDPRLHAILLVPLAPVALTARPLVVPDCSSIEIEVLTEREIVLTVDGQFYTQLPSNLKIRVEKSPRKTKFVRFSERIYPKYTLKIKKKF</sequence>
<feature type="chain" id="PRO_1000205433" description="NAD kinase">
    <location>
        <begin position="1"/>
        <end position="276"/>
    </location>
</feature>
<feature type="active site" description="Proton acceptor" evidence="1">
    <location>
        <position position="67"/>
    </location>
</feature>
<feature type="binding site" evidence="1">
    <location>
        <begin position="67"/>
        <end position="68"/>
    </location>
    <ligand>
        <name>NAD(+)</name>
        <dbReference type="ChEBI" id="CHEBI:57540"/>
    </ligand>
</feature>
<feature type="binding site" evidence="1">
    <location>
        <position position="72"/>
    </location>
    <ligand>
        <name>NAD(+)</name>
        <dbReference type="ChEBI" id="CHEBI:57540"/>
    </ligand>
</feature>
<feature type="binding site" evidence="1">
    <location>
        <begin position="136"/>
        <end position="137"/>
    </location>
    <ligand>
        <name>NAD(+)</name>
        <dbReference type="ChEBI" id="CHEBI:57540"/>
    </ligand>
</feature>
<feature type="binding site" evidence="1">
    <location>
        <position position="147"/>
    </location>
    <ligand>
        <name>NAD(+)</name>
        <dbReference type="ChEBI" id="CHEBI:57540"/>
    </ligand>
</feature>
<feature type="binding site" evidence="1">
    <location>
        <position position="164"/>
    </location>
    <ligand>
        <name>NAD(+)</name>
        <dbReference type="ChEBI" id="CHEBI:57540"/>
    </ligand>
</feature>
<feature type="binding site" evidence="1">
    <location>
        <position position="166"/>
    </location>
    <ligand>
        <name>NAD(+)</name>
        <dbReference type="ChEBI" id="CHEBI:57540"/>
    </ligand>
</feature>
<feature type="binding site" evidence="1">
    <location>
        <begin position="177"/>
        <end position="182"/>
    </location>
    <ligand>
        <name>NAD(+)</name>
        <dbReference type="ChEBI" id="CHEBI:57540"/>
    </ligand>
</feature>
<feature type="binding site" evidence="1">
    <location>
        <position position="201"/>
    </location>
    <ligand>
        <name>NAD(+)</name>
        <dbReference type="ChEBI" id="CHEBI:57540"/>
    </ligand>
</feature>
<feature type="binding site" evidence="1">
    <location>
        <position position="235"/>
    </location>
    <ligand>
        <name>NAD(+)</name>
        <dbReference type="ChEBI" id="CHEBI:57540"/>
    </ligand>
</feature>
<dbReference type="EC" id="2.7.1.23" evidence="1"/>
<dbReference type="EMBL" id="CP001463">
    <property type="protein sequence ID" value="ACS90891.1"/>
    <property type="molecule type" value="Genomic_DNA"/>
</dbReference>
<dbReference type="RefSeq" id="WP_015850107.1">
    <property type="nucleotide sequence ID" value="NC_012883.1"/>
</dbReference>
<dbReference type="SMR" id="C6A5J6"/>
<dbReference type="STRING" id="604354.TSIB_1840"/>
<dbReference type="GeneID" id="8096851"/>
<dbReference type="KEGG" id="tsi:TSIB_1840"/>
<dbReference type="eggNOG" id="arCOG01348">
    <property type="taxonomic scope" value="Archaea"/>
</dbReference>
<dbReference type="HOGENOM" id="CLU_008831_0_1_2"/>
<dbReference type="OrthoDB" id="77798at2157"/>
<dbReference type="Proteomes" id="UP000009079">
    <property type="component" value="Chromosome"/>
</dbReference>
<dbReference type="GO" id="GO:0005737">
    <property type="term" value="C:cytoplasm"/>
    <property type="evidence" value="ECO:0007669"/>
    <property type="project" value="UniProtKB-SubCell"/>
</dbReference>
<dbReference type="GO" id="GO:0005524">
    <property type="term" value="F:ATP binding"/>
    <property type="evidence" value="ECO:0007669"/>
    <property type="project" value="UniProtKB-KW"/>
</dbReference>
<dbReference type="GO" id="GO:0046872">
    <property type="term" value="F:metal ion binding"/>
    <property type="evidence" value="ECO:0007669"/>
    <property type="project" value="UniProtKB-UniRule"/>
</dbReference>
<dbReference type="GO" id="GO:0003951">
    <property type="term" value="F:NAD+ kinase activity"/>
    <property type="evidence" value="ECO:0007669"/>
    <property type="project" value="UniProtKB-UniRule"/>
</dbReference>
<dbReference type="GO" id="GO:0019674">
    <property type="term" value="P:NAD metabolic process"/>
    <property type="evidence" value="ECO:0007669"/>
    <property type="project" value="InterPro"/>
</dbReference>
<dbReference type="GO" id="GO:0006741">
    <property type="term" value="P:NADP biosynthetic process"/>
    <property type="evidence" value="ECO:0007669"/>
    <property type="project" value="UniProtKB-UniRule"/>
</dbReference>
<dbReference type="FunFam" id="2.60.200.30:FF:000009">
    <property type="entry name" value="Poly(P)/ATP NAD kinase"/>
    <property type="match status" value="1"/>
</dbReference>
<dbReference type="Gene3D" id="3.40.50.10330">
    <property type="entry name" value="Probable inorganic polyphosphate/atp-NAD kinase, domain 1"/>
    <property type="match status" value="1"/>
</dbReference>
<dbReference type="Gene3D" id="2.60.200.30">
    <property type="entry name" value="Probable inorganic polyphosphate/atp-NAD kinase, domain 2"/>
    <property type="match status" value="1"/>
</dbReference>
<dbReference type="HAMAP" id="MF_00361">
    <property type="entry name" value="NAD_kinase"/>
    <property type="match status" value="1"/>
</dbReference>
<dbReference type="InterPro" id="IPR017438">
    <property type="entry name" value="ATP-NAD_kinase_N"/>
</dbReference>
<dbReference type="InterPro" id="IPR017437">
    <property type="entry name" value="ATP-NAD_kinase_PpnK-typ_C"/>
</dbReference>
<dbReference type="InterPro" id="IPR016064">
    <property type="entry name" value="NAD/diacylglycerol_kinase_sf"/>
</dbReference>
<dbReference type="InterPro" id="IPR002504">
    <property type="entry name" value="NADK"/>
</dbReference>
<dbReference type="NCBIfam" id="NF002984">
    <property type="entry name" value="PRK03708.1"/>
    <property type="match status" value="1"/>
</dbReference>
<dbReference type="PANTHER" id="PTHR20275:SF43">
    <property type="entry name" value="BIFUNCTIONAL NADP PHOSPHATASE_NAD KINASE"/>
    <property type="match status" value="1"/>
</dbReference>
<dbReference type="PANTHER" id="PTHR20275">
    <property type="entry name" value="NAD KINASE"/>
    <property type="match status" value="1"/>
</dbReference>
<dbReference type="Pfam" id="PF01513">
    <property type="entry name" value="NAD_kinase"/>
    <property type="match status" value="1"/>
</dbReference>
<dbReference type="Pfam" id="PF20143">
    <property type="entry name" value="NAD_kinase_C"/>
    <property type="match status" value="1"/>
</dbReference>
<dbReference type="SUPFAM" id="SSF111331">
    <property type="entry name" value="NAD kinase/diacylglycerol kinase-like"/>
    <property type="match status" value="1"/>
</dbReference>
<protein>
    <recommendedName>
        <fullName evidence="1">NAD kinase</fullName>
        <ecNumber evidence="1">2.7.1.23</ecNumber>
    </recommendedName>
    <alternativeName>
        <fullName evidence="1">ATP-dependent NAD kinase</fullName>
    </alternativeName>
</protein>
<comment type="function">
    <text evidence="1">Involved in the regulation of the intracellular balance of NAD and NADP, and is a key enzyme in the biosynthesis of NADP. Catalyzes specifically the phosphorylation on 2'-hydroxyl of the adenosine moiety of NAD to yield NADP.</text>
</comment>
<comment type="catalytic activity">
    <reaction evidence="1">
        <text>NAD(+) + ATP = ADP + NADP(+) + H(+)</text>
        <dbReference type="Rhea" id="RHEA:18629"/>
        <dbReference type="ChEBI" id="CHEBI:15378"/>
        <dbReference type="ChEBI" id="CHEBI:30616"/>
        <dbReference type="ChEBI" id="CHEBI:57540"/>
        <dbReference type="ChEBI" id="CHEBI:58349"/>
        <dbReference type="ChEBI" id="CHEBI:456216"/>
        <dbReference type="EC" id="2.7.1.23"/>
    </reaction>
</comment>
<comment type="cofactor">
    <cofactor evidence="1">
        <name>a divalent metal cation</name>
        <dbReference type="ChEBI" id="CHEBI:60240"/>
    </cofactor>
</comment>
<comment type="subcellular location">
    <subcellularLocation>
        <location evidence="1">Cytoplasm</location>
    </subcellularLocation>
</comment>
<comment type="similarity">
    <text evidence="1">Belongs to the NAD kinase family.</text>
</comment>
<reference key="1">
    <citation type="journal article" date="2009" name="Appl. Environ. Microbiol.">
        <title>Metabolic versatility and indigenous origin of the archaeon Thermococcus sibiricus, isolated from a siberian oil reservoir, as revealed by genome analysis.</title>
        <authorList>
            <person name="Mardanov A.V."/>
            <person name="Ravin N.V."/>
            <person name="Svetlitchnyi V.A."/>
            <person name="Beletsky A.V."/>
            <person name="Miroshnichenko M.L."/>
            <person name="Bonch-Osmolovskaya E.A."/>
            <person name="Skryabin K.G."/>
        </authorList>
    </citation>
    <scope>NUCLEOTIDE SEQUENCE [LARGE SCALE GENOMIC DNA]</scope>
    <source>
        <strain>DSM 12597 / MM 739</strain>
    </source>
</reference>
<proteinExistence type="inferred from homology"/>
<name>NADK_THESM</name>
<evidence type="ECO:0000255" key="1">
    <source>
        <dbReference type="HAMAP-Rule" id="MF_00361"/>
    </source>
</evidence>